<reference key="1">
    <citation type="journal article" date="2004" name="Proc. Natl. Acad. Sci. U.S.A.">
        <title>Genome sequence of the deep-sea gamma-proteobacterium Idiomarina loihiensis reveals amino acid fermentation as a source of carbon and energy.</title>
        <authorList>
            <person name="Hou S."/>
            <person name="Saw J.H."/>
            <person name="Lee K.S."/>
            <person name="Freitas T.A."/>
            <person name="Belisle C."/>
            <person name="Kawarabayasi Y."/>
            <person name="Donachie S.P."/>
            <person name="Pikina A."/>
            <person name="Galperin M.Y."/>
            <person name="Koonin E.V."/>
            <person name="Makarova K.S."/>
            <person name="Omelchenko M.V."/>
            <person name="Sorokin A."/>
            <person name="Wolf Y.I."/>
            <person name="Li Q.X."/>
            <person name="Keum Y.S."/>
            <person name="Campbell S."/>
            <person name="Denery J."/>
            <person name="Aizawa S."/>
            <person name="Shibata S."/>
            <person name="Malahoff A."/>
            <person name="Alam M."/>
        </authorList>
    </citation>
    <scope>NUCLEOTIDE SEQUENCE [LARGE SCALE GENOMIC DNA]</scope>
    <source>
        <strain>ATCC BAA-735 / DSM 15497 / L2-TR</strain>
    </source>
</reference>
<gene>
    <name evidence="1" type="primary">hisS</name>
    <name type="ordered locus">IL2033</name>
</gene>
<proteinExistence type="inferred from homology"/>
<sequence>MNDLLPEQSPAWQQVEAVIRRVAASYGYSEIRMPVLESTQLFKRSIGEVTDIVEKEMYTFDDRNGESVTLRPEGTASCVRAGNQHGLLYNQIQRLWYMGPMFRYERPQKGRYRQFHQFGIETFGLESADADAEVILLSARLWREFGLADQVELQLNSLGSNEARANYRDALKAYLSDYESELDDDSKRRLESNPLRILDSKDEKTQKILEGAPSLSEYWDAESKEHFEQLTARLEAAGISYTLNERLVRGLDYYNRTVFEWVTTALGAQGTVCAGGRYDGLVEQLGGKATPAVGFAMGMERLVLLLQEQGKLTPRRVVDAYLMPLGEEAELNAPRIAEQLRNELPELRLVSHCGGGSMKKQMKKADKSGAQVALIIGADEIAQQLVTVKPLRTAEEQQTLGWQALIEFLQPLTRG</sequence>
<evidence type="ECO:0000255" key="1">
    <source>
        <dbReference type="HAMAP-Rule" id="MF_00127"/>
    </source>
</evidence>
<organism>
    <name type="scientific">Idiomarina loihiensis (strain ATCC BAA-735 / DSM 15497 / L2-TR)</name>
    <dbReference type="NCBI Taxonomy" id="283942"/>
    <lineage>
        <taxon>Bacteria</taxon>
        <taxon>Pseudomonadati</taxon>
        <taxon>Pseudomonadota</taxon>
        <taxon>Gammaproteobacteria</taxon>
        <taxon>Alteromonadales</taxon>
        <taxon>Idiomarinaceae</taxon>
        <taxon>Idiomarina</taxon>
    </lineage>
</organism>
<name>SYH_IDILO</name>
<keyword id="KW-0030">Aminoacyl-tRNA synthetase</keyword>
<keyword id="KW-0067">ATP-binding</keyword>
<keyword id="KW-0963">Cytoplasm</keyword>
<keyword id="KW-0436">Ligase</keyword>
<keyword id="KW-0547">Nucleotide-binding</keyword>
<keyword id="KW-0648">Protein biosynthesis</keyword>
<keyword id="KW-1185">Reference proteome</keyword>
<accession>Q5QYB0</accession>
<comment type="catalytic activity">
    <reaction evidence="1">
        <text>tRNA(His) + L-histidine + ATP = L-histidyl-tRNA(His) + AMP + diphosphate + H(+)</text>
        <dbReference type="Rhea" id="RHEA:17313"/>
        <dbReference type="Rhea" id="RHEA-COMP:9665"/>
        <dbReference type="Rhea" id="RHEA-COMP:9689"/>
        <dbReference type="ChEBI" id="CHEBI:15378"/>
        <dbReference type="ChEBI" id="CHEBI:30616"/>
        <dbReference type="ChEBI" id="CHEBI:33019"/>
        <dbReference type="ChEBI" id="CHEBI:57595"/>
        <dbReference type="ChEBI" id="CHEBI:78442"/>
        <dbReference type="ChEBI" id="CHEBI:78527"/>
        <dbReference type="ChEBI" id="CHEBI:456215"/>
        <dbReference type="EC" id="6.1.1.21"/>
    </reaction>
</comment>
<comment type="subunit">
    <text evidence="1">Homodimer.</text>
</comment>
<comment type="subcellular location">
    <subcellularLocation>
        <location evidence="1">Cytoplasm</location>
    </subcellularLocation>
</comment>
<comment type="similarity">
    <text evidence="1">Belongs to the class-II aminoacyl-tRNA synthetase family.</text>
</comment>
<dbReference type="EC" id="6.1.1.21" evidence="1"/>
<dbReference type="EMBL" id="AE017340">
    <property type="protein sequence ID" value="AAV82865.1"/>
    <property type="molecule type" value="Genomic_DNA"/>
</dbReference>
<dbReference type="SMR" id="Q5QYB0"/>
<dbReference type="STRING" id="283942.IL2033"/>
<dbReference type="KEGG" id="ilo:IL2033"/>
<dbReference type="eggNOG" id="COG0124">
    <property type="taxonomic scope" value="Bacteria"/>
</dbReference>
<dbReference type="HOGENOM" id="CLU_025113_1_1_6"/>
<dbReference type="Proteomes" id="UP000001171">
    <property type="component" value="Chromosome"/>
</dbReference>
<dbReference type="GO" id="GO:0005737">
    <property type="term" value="C:cytoplasm"/>
    <property type="evidence" value="ECO:0007669"/>
    <property type="project" value="UniProtKB-SubCell"/>
</dbReference>
<dbReference type="GO" id="GO:0005524">
    <property type="term" value="F:ATP binding"/>
    <property type="evidence" value="ECO:0007669"/>
    <property type="project" value="UniProtKB-UniRule"/>
</dbReference>
<dbReference type="GO" id="GO:0004821">
    <property type="term" value="F:histidine-tRNA ligase activity"/>
    <property type="evidence" value="ECO:0007669"/>
    <property type="project" value="UniProtKB-UniRule"/>
</dbReference>
<dbReference type="GO" id="GO:0006427">
    <property type="term" value="P:histidyl-tRNA aminoacylation"/>
    <property type="evidence" value="ECO:0007669"/>
    <property type="project" value="UniProtKB-UniRule"/>
</dbReference>
<dbReference type="CDD" id="cd00773">
    <property type="entry name" value="HisRS-like_core"/>
    <property type="match status" value="1"/>
</dbReference>
<dbReference type="CDD" id="cd00859">
    <property type="entry name" value="HisRS_anticodon"/>
    <property type="match status" value="1"/>
</dbReference>
<dbReference type="FunFam" id="3.30.930.10:FF:000005">
    <property type="entry name" value="Histidine--tRNA ligase"/>
    <property type="match status" value="1"/>
</dbReference>
<dbReference type="Gene3D" id="3.40.50.800">
    <property type="entry name" value="Anticodon-binding domain"/>
    <property type="match status" value="1"/>
</dbReference>
<dbReference type="Gene3D" id="3.30.930.10">
    <property type="entry name" value="Bira Bifunctional Protein, Domain 2"/>
    <property type="match status" value="1"/>
</dbReference>
<dbReference type="HAMAP" id="MF_00127">
    <property type="entry name" value="His_tRNA_synth"/>
    <property type="match status" value="1"/>
</dbReference>
<dbReference type="InterPro" id="IPR006195">
    <property type="entry name" value="aa-tRNA-synth_II"/>
</dbReference>
<dbReference type="InterPro" id="IPR045864">
    <property type="entry name" value="aa-tRNA-synth_II/BPL/LPL"/>
</dbReference>
<dbReference type="InterPro" id="IPR004154">
    <property type="entry name" value="Anticodon-bd"/>
</dbReference>
<dbReference type="InterPro" id="IPR036621">
    <property type="entry name" value="Anticodon-bd_dom_sf"/>
</dbReference>
<dbReference type="InterPro" id="IPR015807">
    <property type="entry name" value="His-tRNA-ligase"/>
</dbReference>
<dbReference type="InterPro" id="IPR041715">
    <property type="entry name" value="HisRS-like_core"/>
</dbReference>
<dbReference type="InterPro" id="IPR004516">
    <property type="entry name" value="HisRS/HisZ"/>
</dbReference>
<dbReference type="InterPro" id="IPR033656">
    <property type="entry name" value="HisRS_anticodon"/>
</dbReference>
<dbReference type="NCBIfam" id="TIGR00442">
    <property type="entry name" value="hisS"/>
    <property type="match status" value="1"/>
</dbReference>
<dbReference type="PANTHER" id="PTHR43707:SF1">
    <property type="entry name" value="HISTIDINE--TRNA LIGASE, MITOCHONDRIAL-RELATED"/>
    <property type="match status" value="1"/>
</dbReference>
<dbReference type="PANTHER" id="PTHR43707">
    <property type="entry name" value="HISTIDYL-TRNA SYNTHETASE"/>
    <property type="match status" value="1"/>
</dbReference>
<dbReference type="Pfam" id="PF03129">
    <property type="entry name" value="HGTP_anticodon"/>
    <property type="match status" value="1"/>
</dbReference>
<dbReference type="Pfam" id="PF13393">
    <property type="entry name" value="tRNA-synt_His"/>
    <property type="match status" value="1"/>
</dbReference>
<dbReference type="PIRSF" id="PIRSF001549">
    <property type="entry name" value="His-tRNA_synth"/>
    <property type="match status" value="1"/>
</dbReference>
<dbReference type="SUPFAM" id="SSF52954">
    <property type="entry name" value="Class II aaRS ABD-related"/>
    <property type="match status" value="1"/>
</dbReference>
<dbReference type="SUPFAM" id="SSF55681">
    <property type="entry name" value="Class II aaRS and biotin synthetases"/>
    <property type="match status" value="1"/>
</dbReference>
<dbReference type="PROSITE" id="PS50862">
    <property type="entry name" value="AA_TRNA_LIGASE_II"/>
    <property type="match status" value="1"/>
</dbReference>
<feature type="chain" id="PRO_0000136176" description="Histidine--tRNA ligase">
    <location>
        <begin position="1"/>
        <end position="415"/>
    </location>
</feature>
<protein>
    <recommendedName>
        <fullName evidence="1">Histidine--tRNA ligase</fullName>
        <ecNumber evidence="1">6.1.1.21</ecNumber>
    </recommendedName>
    <alternativeName>
        <fullName evidence="1">Histidyl-tRNA synthetase</fullName>
        <shortName evidence="1">HisRS</shortName>
    </alternativeName>
</protein>